<dbReference type="EMBL" id="AF075290">
    <property type="protein sequence ID" value="AAD42925.1"/>
    <property type="molecule type" value="Genomic_DNA"/>
</dbReference>
<dbReference type="EMBL" id="AL138688">
    <property type="status" value="NOT_ANNOTATED_CDS"/>
    <property type="molecule type" value="Genomic_DNA"/>
</dbReference>
<dbReference type="EMBL" id="BC121137">
    <property type="protein sequence ID" value="AAI21138.1"/>
    <property type="molecule type" value="mRNA"/>
</dbReference>
<dbReference type="CCDS" id="CCDS9289.1"/>
<dbReference type="RefSeq" id="NP_068773.2">
    <property type="nucleotide sequence ID" value="NM_021954.3"/>
</dbReference>
<dbReference type="RefSeq" id="XP_011533350.1">
    <property type="nucleotide sequence ID" value="XM_011535048.3"/>
</dbReference>
<dbReference type="SMR" id="Q9Y6H8"/>
<dbReference type="BioGRID" id="108967">
    <property type="interactions" value="19"/>
</dbReference>
<dbReference type="FunCoup" id="Q9Y6H8">
    <property type="interactions" value="391"/>
</dbReference>
<dbReference type="IntAct" id="Q9Y6H8">
    <property type="interactions" value="11"/>
</dbReference>
<dbReference type="STRING" id="9606.ENSP00000241125"/>
<dbReference type="TCDB" id="1.A.24.1.5">
    <property type="family name" value="the gap junction-forming connexin (connexin) family"/>
</dbReference>
<dbReference type="GlyGen" id="Q9Y6H8">
    <property type="glycosylation" value="1 site"/>
</dbReference>
<dbReference type="iPTMnet" id="Q9Y6H8"/>
<dbReference type="PhosphoSitePlus" id="Q9Y6H8"/>
<dbReference type="SwissPalm" id="Q9Y6H8"/>
<dbReference type="BioMuta" id="GJA3"/>
<dbReference type="DMDM" id="311033478"/>
<dbReference type="MassIVE" id="Q9Y6H8"/>
<dbReference type="PaxDb" id="9606-ENSP00000241125"/>
<dbReference type="PeptideAtlas" id="Q9Y6H8"/>
<dbReference type="ProteomicsDB" id="86687"/>
<dbReference type="Antibodypedia" id="22305">
    <property type="antibodies" value="207 antibodies from 31 providers"/>
</dbReference>
<dbReference type="DNASU" id="2700"/>
<dbReference type="Ensembl" id="ENST00000241125.4">
    <property type="protein sequence ID" value="ENSP00000241125.3"/>
    <property type="gene ID" value="ENSG00000121743.4"/>
</dbReference>
<dbReference type="GeneID" id="2700"/>
<dbReference type="KEGG" id="hsa:2700"/>
<dbReference type="MANE-Select" id="ENST00000241125.4">
    <property type="protein sequence ID" value="ENSP00000241125.3"/>
    <property type="RefSeq nucleotide sequence ID" value="NM_021954.4"/>
    <property type="RefSeq protein sequence ID" value="NP_068773.2"/>
</dbReference>
<dbReference type="UCSC" id="uc001umx.2">
    <property type="organism name" value="human"/>
</dbReference>
<dbReference type="AGR" id="HGNC:4277"/>
<dbReference type="CTD" id="2700"/>
<dbReference type="DisGeNET" id="2700"/>
<dbReference type="GeneCards" id="GJA3"/>
<dbReference type="HGNC" id="HGNC:4277">
    <property type="gene designation" value="GJA3"/>
</dbReference>
<dbReference type="HPA" id="ENSG00000121743">
    <property type="expression patterns" value="Tissue enhanced (heart muscle, parathyroid gland, placenta)"/>
</dbReference>
<dbReference type="MalaCards" id="GJA3"/>
<dbReference type="MIM" id="121015">
    <property type="type" value="gene"/>
</dbReference>
<dbReference type="MIM" id="601885">
    <property type="type" value="phenotype"/>
</dbReference>
<dbReference type="neXtProt" id="NX_Q9Y6H8"/>
<dbReference type="OpenTargets" id="ENSG00000121743"/>
<dbReference type="Orphanet" id="98991">
    <property type="disease" value="Early-onset nuclear cataract"/>
</dbReference>
<dbReference type="Orphanet" id="98993">
    <property type="disease" value="Early-onset posterior polar cataract"/>
</dbReference>
<dbReference type="Orphanet" id="98984">
    <property type="disease" value="Pulverulent cataract"/>
</dbReference>
<dbReference type="VEuPathDB" id="HostDB:ENSG00000121743"/>
<dbReference type="eggNOG" id="ENOG502QUKJ">
    <property type="taxonomic scope" value="Eukaryota"/>
</dbReference>
<dbReference type="GeneTree" id="ENSGT01050000244864"/>
<dbReference type="HOGENOM" id="CLU_037388_0_0_1"/>
<dbReference type="InParanoid" id="Q9Y6H8"/>
<dbReference type="OMA" id="YTHPACP"/>
<dbReference type="OrthoDB" id="9930281at2759"/>
<dbReference type="PAN-GO" id="Q9Y6H8">
    <property type="GO annotations" value="3 GO annotations based on evolutionary models"/>
</dbReference>
<dbReference type="PhylomeDB" id="Q9Y6H8"/>
<dbReference type="TreeFam" id="TF329606"/>
<dbReference type="PathwayCommons" id="Q9Y6H8"/>
<dbReference type="Reactome" id="R-HSA-190861">
    <property type="pathway name" value="Gap junction assembly"/>
</dbReference>
<dbReference type="SignaLink" id="Q9Y6H8"/>
<dbReference type="BioGRID-ORCS" id="2700">
    <property type="hits" value="322 hits in 1145 CRISPR screens"/>
</dbReference>
<dbReference type="GeneWiki" id="GJA3"/>
<dbReference type="GenomeRNAi" id="2700"/>
<dbReference type="Pharos" id="Q9Y6H8">
    <property type="development level" value="Tbio"/>
</dbReference>
<dbReference type="PRO" id="PR:Q9Y6H8"/>
<dbReference type="Proteomes" id="UP000005640">
    <property type="component" value="Chromosome 13"/>
</dbReference>
<dbReference type="RNAct" id="Q9Y6H8">
    <property type="molecule type" value="protein"/>
</dbReference>
<dbReference type="Bgee" id="ENSG00000121743">
    <property type="expression patterns" value="Expressed in left ventricle myocardium and 51 other cell types or tissues"/>
</dbReference>
<dbReference type="GO" id="GO:0005922">
    <property type="term" value="C:connexin complex"/>
    <property type="evidence" value="ECO:0000314"/>
    <property type="project" value="UniProtKB"/>
</dbReference>
<dbReference type="GO" id="GO:0005886">
    <property type="term" value="C:plasma membrane"/>
    <property type="evidence" value="ECO:0000314"/>
    <property type="project" value="UniProtKB"/>
</dbReference>
<dbReference type="GO" id="GO:0005243">
    <property type="term" value="F:gap junction channel activity"/>
    <property type="evidence" value="ECO:0000318"/>
    <property type="project" value="GO_Central"/>
</dbReference>
<dbReference type="GO" id="GO:0055077">
    <property type="term" value="F:gap junction hemi-channel activity"/>
    <property type="evidence" value="ECO:0000314"/>
    <property type="project" value="UniProtKB"/>
</dbReference>
<dbReference type="GO" id="GO:0007267">
    <property type="term" value="P:cell-cell signaling"/>
    <property type="evidence" value="ECO:0000318"/>
    <property type="project" value="GO_Central"/>
</dbReference>
<dbReference type="GO" id="GO:1990349">
    <property type="term" value="P:gap junction-mediated intercellular transport"/>
    <property type="evidence" value="ECO:0000314"/>
    <property type="project" value="UniProtKB"/>
</dbReference>
<dbReference type="GO" id="GO:0007601">
    <property type="term" value="P:visual perception"/>
    <property type="evidence" value="ECO:0007669"/>
    <property type="project" value="InterPro"/>
</dbReference>
<dbReference type="FunFam" id="1.20.1440.80:FF:000002">
    <property type="entry name" value="Gap junction protein"/>
    <property type="match status" value="1"/>
</dbReference>
<dbReference type="Gene3D" id="1.20.1440.80">
    <property type="entry name" value="Gap junction channel protein cysteine-rich domain"/>
    <property type="match status" value="1"/>
</dbReference>
<dbReference type="InterPro" id="IPR000500">
    <property type="entry name" value="Connexin"/>
</dbReference>
<dbReference type="InterPro" id="IPR002262">
    <property type="entry name" value="Connexin46"/>
</dbReference>
<dbReference type="InterPro" id="IPR034634">
    <property type="entry name" value="Connexin_C"/>
</dbReference>
<dbReference type="InterPro" id="IPR019570">
    <property type="entry name" value="Connexin_CCC"/>
</dbReference>
<dbReference type="InterPro" id="IPR017990">
    <property type="entry name" value="Connexin_CS"/>
</dbReference>
<dbReference type="InterPro" id="IPR013092">
    <property type="entry name" value="Connexin_N"/>
</dbReference>
<dbReference type="InterPro" id="IPR038359">
    <property type="entry name" value="Connexin_N_sf"/>
</dbReference>
<dbReference type="PANTHER" id="PTHR11984">
    <property type="entry name" value="CONNEXIN"/>
    <property type="match status" value="1"/>
</dbReference>
<dbReference type="PANTHER" id="PTHR11984:SF12">
    <property type="entry name" value="GAP JUNCTION ALPHA-3 PROTEIN"/>
    <property type="match status" value="1"/>
</dbReference>
<dbReference type="Pfam" id="PF00029">
    <property type="entry name" value="Connexin"/>
    <property type="match status" value="1"/>
</dbReference>
<dbReference type="PRINTS" id="PR00206">
    <property type="entry name" value="CONNEXIN"/>
</dbReference>
<dbReference type="PRINTS" id="PR01133">
    <property type="entry name" value="CONNEXINA3"/>
</dbReference>
<dbReference type="SMART" id="SM00037">
    <property type="entry name" value="CNX"/>
    <property type="match status" value="1"/>
</dbReference>
<dbReference type="SMART" id="SM01089">
    <property type="entry name" value="Connexin_CCC"/>
    <property type="match status" value="1"/>
</dbReference>
<dbReference type="SUPFAM" id="SSF118220">
    <property type="entry name" value="Connexin43"/>
    <property type="match status" value="1"/>
</dbReference>
<dbReference type="PROSITE" id="PS00407">
    <property type="entry name" value="CONNEXINS_1"/>
    <property type="match status" value="1"/>
</dbReference>
<dbReference type="PROSITE" id="PS00408">
    <property type="entry name" value="CONNEXINS_2"/>
    <property type="match status" value="1"/>
</dbReference>
<gene>
    <name type="primary">GJA3</name>
</gene>
<name>CXA3_HUMAN</name>
<reference key="1">
    <citation type="journal article" date="1999" name="Am. J. Hum. Genet.">
        <title>Connexin46 mutations in autosomal dominant congenital cataract.</title>
        <authorList>
            <person name="Mackay D."/>
            <person name="Ionides A."/>
            <person name="Kibar Z."/>
            <person name="Rouleau G."/>
            <person name="Berry V."/>
            <person name="Moore A."/>
            <person name="Shiels A."/>
            <person name="Bhattacharya S."/>
        </authorList>
    </citation>
    <scope>NUCLEOTIDE SEQUENCE [GENOMIC DNA]</scope>
    <scope>VARIANTS CTRCT14 SER-63 AND MET-299</scope>
    <source>
        <tissue>Lens fibers</tissue>
    </source>
</reference>
<reference key="2">
    <citation type="journal article" date="2004" name="Nature">
        <title>The DNA sequence and analysis of human chromosome 13.</title>
        <authorList>
            <person name="Dunham A."/>
            <person name="Matthews L.H."/>
            <person name="Burton J."/>
            <person name="Ashurst J.L."/>
            <person name="Howe K.L."/>
            <person name="Ashcroft K.J."/>
            <person name="Beare D.M."/>
            <person name="Burford D.C."/>
            <person name="Hunt S.E."/>
            <person name="Griffiths-Jones S."/>
            <person name="Jones M.C."/>
            <person name="Keenan S.J."/>
            <person name="Oliver K."/>
            <person name="Scott C.E."/>
            <person name="Ainscough R."/>
            <person name="Almeida J.P."/>
            <person name="Ambrose K.D."/>
            <person name="Andrews D.T."/>
            <person name="Ashwell R.I.S."/>
            <person name="Babbage A.K."/>
            <person name="Bagguley C.L."/>
            <person name="Bailey J."/>
            <person name="Bannerjee R."/>
            <person name="Barlow K.F."/>
            <person name="Bates K."/>
            <person name="Beasley H."/>
            <person name="Bird C.P."/>
            <person name="Bray-Allen S."/>
            <person name="Brown A.J."/>
            <person name="Brown J.Y."/>
            <person name="Burrill W."/>
            <person name="Carder C."/>
            <person name="Carter N.P."/>
            <person name="Chapman J.C."/>
            <person name="Clamp M.E."/>
            <person name="Clark S.Y."/>
            <person name="Clarke G."/>
            <person name="Clee C.M."/>
            <person name="Clegg S.C."/>
            <person name="Cobley V."/>
            <person name="Collins J.E."/>
            <person name="Corby N."/>
            <person name="Coville G.J."/>
            <person name="Deloukas P."/>
            <person name="Dhami P."/>
            <person name="Dunham I."/>
            <person name="Dunn M."/>
            <person name="Earthrowl M.E."/>
            <person name="Ellington A.G."/>
            <person name="Faulkner L."/>
            <person name="Frankish A.G."/>
            <person name="Frankland J."/>
            <person name="French L."/>
            <person name="Garner P."/>
            <person name="Garnett J."/>
            <person name="Gilbert J.G.R."/>
            <person name="Gilson C.J."/>
            <person name="Ghori J."/>
            <person name="Grafham D.V."/>
            <person name="Gribble S.M."/>
            <person name="Griffiths C."/>
            <person name="Hall R.E."/>
            <person name="Hammond S."/>
            <person name="Harley J.L."/>
            <person name="Hart E.A."/>
            <person name="Heath P.D."/>
            <person name="Howden P.J."/>
            <person name="Huckle E.J."/>
            <person name="Hunt P.J."/>
            <person name="Hunt A.R."/>
            <person name="Johnson C."/>
            <person name="Johnson D."/>
            <person name="Kay M."/>
            <person name="Kimberley A.M."/>
            <person name="King A."/>
            <person name="Laird G.K."/>
            <person name="Langford C.J."/>
            <person name="Lawlor S."/>
            <person name="Leongamornlert D.A."/>
            <person name="Lloyd D.M."/>
            <person name="Lloyd C."/>
            <person name="Loveland J.E."/>
            <person name="Lovell J."/>
            <person name="Martin S."/>
            <person name="Mashreghi-Mohammadi M."/>
            <person name="McLaren S.J."/>
            <person name="McMurray A."/>
            <person name="Milne S."/>
            <person name="Moore M.J.F."/>
            <person name="Nickerson T."/>
            <person name="Palmer S.A."/>
            <person name="Pearce A.V."/>
            <person name="Peck A.I."/>
            <person name="Pelan S."/>
            <person name="Phillimore B."/>
            <person name="Porter K.M."/>
            <person name="Rice C.M."/>
            <person name="Searle S."/>
            <person name="Sehra H.K."/>
            <person name="Shownkeen R."/>
            <person name="Skuce C.D."/>
            <person name="Smith M."/>
            <person name="Steward C.A."/>
            <person name="Sycamore N."/>
            <person name="Tester J."/>
            <person name="Thomas D.W."/>
            <person name="Tracey A."/>
            <person name="Tromans A."/>
            <person name="Tubby B."/>
            <person name="Wall M."/>
            <person name="Wallis J.M."/>
            <person name="West A.P."/>
            <person name="Whitehead S.L."/>
            <person name="Willey D.L."/>
            <person name="Wilming L."/>
            <person name="Wray P.W."/>
            <person name="Wright M.W."/>
            <person name="Young L."/>
            <person name="Coulson A."/>
            <person name="Durbin R.M."/>
            <person name="Hubbard T."/>
            <person name="Sulston J.E."/>
            <person name="Beck S."/>
            <person name="Bentley D.R."/>
            <person name="Rogers J."/>
            <person name="Ross M.T."/>
        </authorList>
    </citation>
    <scope>NUCLEOTIDE SEQUENCE [LARGE SCALE GENOMIC DNA]</scope>
</reference>
<reference key="3">
    <citation type="journal article" date="2004" name="Genome Res.">
        <title>The status, quality, and expansion of the NIH full-length cDNA project: the Mammalian Gene Collection (MGC).</title>
        <authorList>
            <consortium name="The MGC Project Team"/>
        </authorList>
    </citation>
    <scope>NUCLEOTIDE SEQUENCE [LARGE SCALE MRNA]</scope>
    <scope>VARIANT MET-299</scope>
</reference>
<reference key="4">
    <citation type="journal article" date="2000" name="Hum. Genet.">
        <title>Further evidence of autosomal dominant congenital zonular pulverulent cataracts linked to 13q11 (CZP3) and a novel mutation in connexin 46 (GJA3).</title>
        <authorList>
            <person name="Rees M.I."/>
            <person name="Watts P."/>
            <person name="Fenton I."/>
            <person name="Clarke A."/>
            <person name="Snell R.G."/>
            <person name="Owen M.J."/>
            <person name="Gray J."/>
        </authorList>
    </citation>
    <scope>VARIANT CTRCT14 LEU-187</scope>
</reference>
<reference key="5">
    <citation type="journal article" date="2003" name="Mol. Vis.">
        <title>A novel mutation in GJA3 (connexin46) for autosomal dominant congenital nuclear pulverulent cataract.</title>
        <authorList>
            <person name="Jiang H."/>
            <person name="Jin Y."/>
            <person name="Bu L."/>
            <person name="Zhang W."/>
            <person name="Liu J."/>
            <person name="Cui B."/>
            <person name="Kong X."/>
            <person name="Hu L."/>
        </authorList>
    </citation>
    <scope>VARIANT CTRCT14 LEU-32</scope>
</reference>
<reference key="6">
    <citation type="journal article" date="2004" name="J. Med. Genet.">
        <title>A novel mutation in the Connexin 46 gene causes autosomal dominant congenital cataract with incomplete penetrance.</title>
        <authorList>
            <person name="Burdon K.P."/>
            <person name="Wirth M.G."/>
            <person name="Mackey D.A."/>
            <person name="Russell-Eggitt I.M."/>
            <person name="Craig J.E."/>
            <person name="Elder J.E."/>
            <person name="Dickinson J.L."/>
            <person name="Sale M.M."/>
        </authorList>
    </citation>
    <scope>VARIANT CTRCT14 HIS-76</scope>
</reference>
<reference key="7">
    <citation type="journal article" date="2004" name="Mol. Vis.">
        <title>A novel missense mutation in the gene for gap-junction protein alpha3 (GJA3) associated with autosomal dominant 'nuclear punctate' cataracts linked to chromosome 13q.</title>
        <authorList>
            <person name="Bennett T.M."/>
            <person name="Mackay D.S."/>
            <person name="Knopf H.L.S."/>
            <person name="Shiels A."/>
        </authorList>
    </citation>
    <scope>VARIANT CTRCT14 LEU-59</scope>
</reference>
<reference key="8">
    <citation type="journal article" date="2004" name="Mol. Vis.">
        <title>A novel connexin46 (GJA3) mutation in autosomal dominant congenital nuclear pulverulent cataract.</title>
        <authorList>
            <person name="Li Y."/>
            <person name="Wang J."/>
            <person name="Dong B."/>
            <person name="Man H."/>
        </authorList>
    </citation>
    <scope>VARIANT CTRCT14 THR-188</scope>
</reference>
<reference key="9">
    <citation type="journal article" date="2005" name="Br. J. Ophthalmol.">
        <title>Two novel mutations of connexin genes in Chinese families with autosomal dominant congenital nuclear cataract.</title>
        <authorList>
            <person name="Ma Z.W."/>
            <person name="Zheng J.Q."/>
            <person name="Li J."/>
            <person name="Li X.R."/>
            <person name="Tang X."/>
            <person name="Yuan X.Y."/>
            <person name="Zhang X.M."/>
            <person name="Sun H.M."/>
        </authorList>
    </citation>
    <scope>VARIANT CTRCT14 SER-45</scope>
</reference>
<reference key="10">
    <citation type="journal article" date="2006" name="Br. J. Ophthalmol.">
        <authorList>
            <person name="Ma Z.W."/>
            <person name="Zheng J.Q."/>
            <person name="Li J."/>
            <person name="Li X.R."/>
            <person name="Tang X."/>
            <person name="Yuan X.Y."/>
            <person name="Zhang X.M."/>
            <person name="Sun H.M."/>
        </authorList>
    </citation>
    <scope>ERRATUM OF PUBMED:16234473</scope>
</reference>
<reference key="11">
    <citation type="journal article" date="2005" name="Mol. Vis.">
        <title>Novel mutations in GJA3 associated with autosomal dominant congenital cataract in the Indian population.</title>
        <authorList>
            <person name="Devi R.R."/>
            <person name="Reena C."/>
            <person name="Vijayalakshmi P."/>
        </authorList>
    </citation>
    <scope>VARIANTS CTRCT14 MET-28 AND GLY-76</scope>
</reference>
<reference key="12">
    <citation type="journal article" date="2006" name="Mol. Vis.">
        <title>A novel mutation in the connexin 46 gene (GJA3) causes autosomal dominant zonular pulverulent cataract in a Hispanic family.</title>
        <authorList>
            <person name="Addison P.K."/>
            <person name="Berry V."/>
            <person name="Holden K.R."/>
            <person name="Espinal D."/>
            <person name="Rivera B."/>
            <person name="Su H."/>
            <person name="Srivastava A.K."/>
            <person name="Bhattacharya S.S."/>
        </authorList>
    </citation>
    <scope>VARIANT CTRCT14 TYR-3</scope>
</reference>
<reference key="13">
    <citation type="journal article" date="2006" name="Mol. Vis.">
        <title>The congenital 'ant-egg' cataract phenotype is caused by a missense mutation in connexin46.</title>
        <authorList>
            <person name="Hansen L."/>
            <person name="Yao W."/>
            <person name="Eiberg H."/>
            <person name="Funding M."/>
            <person name="Riise R."/>
            <person name="Kjaer K.W."/>
            <person name="Hejtmancik J.F."/>
            <person name="Rosenberg T."/>
        </authorList>
    </citation>
    <scope>VARIANT CTRCT14 SER-11</scope>
</reference>
<reference key="14">
    <citation type="journal article" date="2007" name="Mol. Vis.">
        <title>A novel 'pearl box' cataract associated with a mutation in the connexin 46 (GJA3) gene.</title>
        <authorList>
            <person name="Guleria K."/>
            <person name="Vanita V."/>
            <person name="Singh D."/>
            <person name="Singh J.R."/>
        </authorList>
    </citation>
    <scope>VARIANT CTRCT14 MET-87</scope>
</reference>
<reference key="15">
    <citation type="journal article" date="2007" name="Mol. Vis.">
        <title>A novel mutation in the connexin 46 (GJA3) gene associated with autosomal dominant congenital cataract in an Indian family.</title>
        <authorList>
            <person name="Guleria K."/>
            <person name="Sperling K."/>
            <person name="Singh D."/>
            <person name="Varon R."/>
            <person name="Singh J.R."/>
            <person name="Vanita V."/>
        </authorList>
    </citation>
    <scope>VARIANT CTRCT14 LEU-33</scope>
</reference>
<reference key="16">
    <citation type="journal article" date="2009" name="Invest. Ophthalmol. Vis. Sci.">
        <title>Comprehensive mutational screening in a cohort of Danish families with hereditary congenital cataract.</title>
        <authorList>
            <person name="Hansen L."/>
            <person name="Mikkelsen A."/>
            <person name="Nuernberg P."/>
            <person name="Nuernberg G."/>
            <person name="Anjum I."/>
            <person name="Eiberg H."/>
            <person name="Rosenberg T."/>
        </authorList>
    </citation>
    <scope>VARIANTS CTRCT14 LEU-59 AND HIS-76</scope>
</reference>
<reference key="17">
    <citation type="journal article" date="2010" name="Mol. Vis.">
        <title>Mutation analysis of congenital cataract in a Chinese family identified a novel missense mutation in the connexin 46 gene (GJA3).</title>
        <authorList>
            <person name="Zhou Z."/>
            <person name="Hu S."/>
            <person name="Wang B."/>
            <person name="Zhou N."/>
            <person name="Zhou S."/>
            <person name="Ma X."/>
            <person name="Qi Y."/>
        </authorList>
    </citation>
    <scope>VARIANT CTRCT14 MET-44</scope>
</reference>
<reference key="18">
    <citation type="journal article" date="2011" name="Hum. Mutat.">
        <title>A novel GJA3 mutation associated with congenital nuclear pulverulent and posterior polar cataract in a Chinese family.</title>
        <authorList>
            <person name="Yao K."/>
            <person name="Wang W."/>
            <person name="Zhu Y."/>
            <person name="Jin C."/>
            <person name="Shentu X."/>
            <person name="Jiang J."/>
            <person name="Zhang Y."/>
            <person name="Ni S."/>
        </authorList>
    </citation>
    <scope>VARIANT CTRCT14 ASP-2</scope>
    <scope>CHARACTERIZATION OF VARIANT CTRCT14 ASP-2</scope>
</reference>
<reference key="19">
    <citation type="journal article" date="2011" name="Mol. Vis.">
        <title>Mutation analysis of 12 genes in Chinese families with congenital cataracts.</title>
        <authorList>
            <person name="Sun W."/>
            <person name="Xiao X."/>
            <person name="Li S."/>
            <person name="Guo X."/>
            <person name="Zhang Q."/>
        </authorList>
    </citation>
    <scope>VARIANT CTRCT14 LEU-59</scope>
</reference>
<reference key="20">
    <citation type="journal article" date="2011" name="Mol. Vis.">
        <title>A novel mutation in the GJA3 (connexin46) gene is associated with autosomal dominant congenital nuclear cataract in a Chinese family.</title>
        <authorList>
            <person name="Yang G."/>
            <person name="Xing B."/>
            <person name="Liu G."/>
            <person name="Lu X."/>
            <person name="Jia X."/>
            <person name="Lu X."/>
            <person name="Wang X."/>
            <person name="Yu H."/>
            <person name="Fu Y."/>
            <person name="Zhao J."/>
        </authorList>
    </citation>
    <scope>VARIANT CTRCT14 ASN-47</scope>
</reference>
<reference key="21">
    <citation type="journal article" date="2011" name="Mol. Vis.">
        <title>A novel mutation in the connexin 46 (GJA3) gene associated with congenital cataract in a Chinese pedigree.</title>
        <authorList>
            <person name="Ding X."/>
            <person name="Wang B."/>
            <person name="Luo Y."/>
            <person name="Hu S."/>
            <person name="Zhou G."/>
            <person name="Zhou Z."/>
            <person name="Wang J."/>
            <person name="Ma X."/>
            <person name="Qi Y."/>
        </authorList>
    </citation>
    <scope>VARIANT CTRCT14 SER-187</scope>
</reference>
<reference key="22">
    <citation type="journal article" date="2011" name="Mol. Vis.">
        <title>A recurrent missense mutation in GJA3 associated with autosomal dominant cataract linked to chromosome 13q.</title>
        <authorList>
            <person name="Bennett T.M."/>
            <person name="Shiels A."/>
        </authorList>
    </citation>
    <scope>VARIANT CTRCT14 MET-44</scope>
</reference>
<reference key="23">
    <citation type="journal article" date="2012" name="Mol. Vis.">
        <title>Coralliform cataract caused by a novel connexin46 (GJA3) mutation in a Chinese family.</title>
        <authorList>
            <person name="Zhang X."/>
            <person name="Wang L."/>
            <person name="Wang J."/>
            <person name="Dong B."/>
            <person name="Li Y."/>
        </authorList>
    </citation>
    <scope>VARIANT CTRCT14 ILE-188</scope>
</reference>
<reference key="24">
    <citation type="journal article" date="2013" name="Indian J. Biochem. Biophys.">
        <title>Identification of a GJA3 mutation in a Chinese family with congenital nuclear cataract using exome sequencing.</title>
        <authorList>
            <person name="Guo Y."/>
            <person name="Yuan L."/>
            <person name="Yi J."/>
            <person name="Xiao J."/>
            <person name="Xu H."/>
            <person name="Lv H."/>
            <person name="Xiong W."/>
            <person name="Zheng W."/>
            <person name="Guan L."/>
            <person name="Zhang J."/>
            <person name="Xiang H."/>
            <person name="Qi Y."/>
            <person name="Deng H."/>
        </authorList>
    </citation>
    <scope>VARIANT CTRCT14 ASN-47</scope>
</reference>
<reference key="25">
    <citation type="journal article" date="2016" name="DNA Cell Biol.">
        <title>Identification of a GJA3 Mutation in a Large Family with Bilateral Congenital Cataract.</title>
        <authorList>
            <person name="Li B."/>
            <person name="Liu Y."/>
            <person name="Liu Y."/>
            <person name="Guo H."/>
            <person name="Hu Z."/>
            <person name="Xia K."/>
            <person name="Jin X."/>
        </authorList>
    </citation>
    <scope>VARIANT CTRCT14 GLY-48</scope>
</reference>
<reference key="26">
    <citation type="journal article" date="2017" name="G3 (Bethesda)">
        <title>High-Throughput Genetic Screening of 51 Pediatric Cataract Genes Identifies Causative Mutations in Inherited Pediatric Cataract in South Eastern Australia.</title>
        <authorList>
            <person name="Javadiyan S."/>
            <person name="Craig J.E."/>
            <person name="Souzeau E."/>
            <person name="Sharma S."/>
            <person name="Lower K.M."/>
            <person name="Mackey D.A."/>
            <person name="Staffieri S.E."/>
            <person name="Elder J.E."/>
            <person name="Taranath D."/>
            <person name="Straga T."/>
            <person name="Black J."/>
            <person name="Pater J."/>
            <person name="Casey T."/>
            <person name="Hewitt A.W."/>
            <person name="Burdon K.P."/>
        </authorList>
    </citation>
    <scope>VARIANTS CTRCT14 MET-19 AND GLN-156</scope>
</reference>
<reference key="27">
    <citation type="journal article" date="2015" name="Optom. Vis. Sci.">
        <title>Identification of a novel GJA3 mutation in congenital nuclear cataract.</title>
        <authorList>
            <person name="Yuan L."/>
            <person name="Guo Y."/>
            <person name="Yi J."/>
            <person name="Xiao J."/>
            <person name="Yuan J."/>
            <person name="Xiong W."/>
            <person name="Xu H."/>
            <person name="Yang Z."/>
            <person name="Zhang J."/>
            <person name="Deng H."/>
        </authorList>
    </citation>
    <scope>VARIANT CTRCT14 GLU-143</scope>
</reference>
<reference key="28">
    <citation type="journal article" date="2018" name="Am. J. Physiol.">
        <title>Alterations at Arg76 of human connexin 46, a residue associated with cataract formation, cause loss of gap junction formation but preserve hemichannel function.</title>
        <authorList>
            <person name="Abrams C.K."/>
            <person name="Peinado A."/>
            <person name="Mahmoud R."/>
            <person name="Bocarsly M."/>
            <person name="Zhang H."/>
            <person name="Chang P."/>
            <person name="Botello-Smith W.M."/>
            <person name="Freidin M.M."/>
            <person name="Luo Y."/>
        </authorList>
    </citation>
    <scope>CHARACTERIZATION OF VARIANTS CTRCT14 GLY-76 AND HIS-76</scope>
    <scope>FUNCTION</scope>
    <scope>SUBCELLULAR LOCATION</scope>
    <scope>MUTAGENESIS OF ARG-76</scope>
</reference>
<sequence>MGDWSFLGRLLENAQEHSTVIGKVWLTVLFIFRILVLGAAAEDVWGDEQSDFTCNTQQPGCENVCYDRAFPISHIRFWALQIIFVSTPTLIYLGHVLHIVRMEEKKKEREEEEQLKRESPSPKEPPQDNPSSRDDRGRVRMAGALLRTYVFNIIFKTLFEVGFIAGQYFLYGFELKPLYRCDRWPCPNTVDCFISRPTEKTIFIIFMLAVACASLLLNMLEIYHLGWKKLKQGVTSRLGPDASEAPLGTADPPPLPPSSRPPAVAIGFPPYYAHTAAPLGQARAVGYPGAPPPAADFKLLALTEARGKGQSAKLYNGHHHLLMTEQNWANQAAERQPPALKAYPAASTPAAPSPVGSSSPPLAHEAEAGAAPLLLDGSGSSLEGSALAGTPEEEEQAVTTAAQMHQPPLPLGDPGRASKASRASSGRARPEDLAI</sequence>
<evidence type="ECO:0000250" key="1">
    <source>
        <dbReference type="UniProtKB" id="Q9TU17"/>
    </source>
</evidence>
<evidence type="ECO:0000256" key="2">
    <source>
        <dbReference type="SAM" id="MobiDB-lite"/>
    </source>
</evidence>
<evidence type="ECO:0000269" key="3">
    <source>
    </source>
</evidence>
<evidence type="ECO:0000269" key="4">
    <source>
    </source>
</evidence>
<evidence type="ECO:0000269" key="5">
    <source>
    </source>
</evidence>
<evidence type="ECO:0000269" key="6">
    <source>
    </source>
</evidence>
<evidence type="ECO:0000269" key="7">
    <source>
    </source>
</evidence>
<evidence type="ECO:0000269" key="8">
    <source>
    </source>
</evidence>
<evidence type="ECO:0000269" key="9">
    <source>
    </source>
</evidence>
<evidence type="ECO:0000269" key="10">
    <source>
    </source>
</evidence>
<evidence type="ECO:0000269" key="11">
    <source>
    </source>
</evidence>
<evidence type="ECO:0000269" key="12">
    <source>
    </source>
</evidence>
<evidence type="ECO:0000269" key="13">
    <source>
    </source>
</evidence>
<evidence type="ECO:0000269" key="14">
    <source>
    </source>
</evidence>
<evidence type="ECO:0000269" key="15">
    <source>
    </source>
</evidence>
<evidence type="ECO:0000269" key="16">
    <source>
    </source>
</evidence>
<evidence type="ECO:0000269" key="17">
    <source>
    </source>
</evidence>
<evidence type="ECO:0000269" key="18">
    <source>
    </source>
</evidence>
<evidence type="ECO:0000269" key="19">
    <source>
    </source>
</evidence>
<evidence type="ECO:0000269" key="20">
    <source>
    </source>
</evidence>
<evidence type="ECO:0000269" key="21">
    <source>
    </source>
</evidence>
<evidence type="ECO:0000269" key="22">
    <source>
    </source>
</evidence>
<evidence type="ECO:0000269" key="23">
    <source>
    </source>
</evidence>
<evidence type="ECO:0000269" key="24">
    <source>
    </source>
</evidence>
<evidence type="ECO:0000269" key="25">
    <source>
    </source>
</evidence>
<evidence type="ECO:0000269" key="26">
    <source>
    </source>
</evidence>
<evidence type="ECO:0000269" key="27">
    <source>
    </source>
</evidence>
<evidence type="ECO:0000269" key="28">
    <source>
    </source>
</evidence>
<evidence type="ECO:0000305" key="29"/>
<feature type="initiator methionine" description="Removed" evidence="1">
    <location>
        <position position="1"/>
    </location>
</feature>
<feature type="chain" id="PRO_0000057810" description="Gap junction alpha-3 protein">
    <location>
        <begin position="2"/>
        <end position="435"/>
    </location>
</feature>
<feature type="intramembrane region" evidence="1">
    <location>
        <begin position="2"/>
        <end position="15"/>
    </location>
</feature>
<feature type="topological domain" description="Cytoplasmic" evidence="29">
    <location>
        <begin position="16"/>
        <end position="19"/>
    </location>
</feature>
<feature type="transmembrane region" description="Helical" evidence="1">
    <location>
        <begin position="20"/>
        <end position="40"/>
    </location>
</feature>
<feature type="topological domain" description="Extracellular" evidence="29">
    <location>
        <begin position="41"/>
        <end position="71"/>
    </location>
</feature>
<feature type="transmembrane region" description="Helical" evidence="1">
    <location>
        <begin position="72"/>
        <end position="92"/>
    </location>
</feature>
<feature type="topological domain" description="Cytoplasmic" evidence="29">
    <location>
        <begin position="93"/>
        <end position="152"/>
    </location>
</feature>
<feature type="transmembrane region" description="Helical" evidence="1">
    <location>
        <begin position="153"/>
        <end position="173"/>
    </location>
</feature>
<feature type="topological domain" description="Extracellular" evidence="29">
    <location>
        <begin position="174"/>
        <end position="201"/>
    </location>
</feature>
<feature type="transmembrane region" description="Helical" evidence="1">
    <location>
        <begin position="202"/>
        <end position="222"/>
    </location>
</feature>
<feature type="topological domain" description="Cytoplasmic" evidence="29">
    <location>
        <begin position="223"/>
        <end position="435"/>
    </location>
</feature>
<feature type="region of interest" description="Disordered" evidence="2">
    <location>
        <begin position="108"/>
        <end position="136"/>
    </location>
</feature>
<feature type="region of interest" description="Disordered" evidence="2">
    <location>
        <begin position="332"/>
        <end position="435"/>
    </location>
</feature>
<feature type="compositionally biased region" description="Basic and acidic residues" evidence="2">
    <location>
        <begin position="108"/>
        <end position="121"/>
    </location>
</feature>
<feature type="compositionally biased region" description="Low complexity" evidence="2">
    <location>
        <begin position="342"/>
        <end position="389"/>
    </location>
</feature>
<feature type="compositionally biased region" description="Low complexity" evidence="2">
    <location>
        <begin position="415"/>
        <end position="427"/>
    </location>
</feature>
<feature type="disulfide bond" evidence="1">
    <location>
        <begin position="54"/>
        <end position="192"/>
    </location>
</feature>
<feature type="disulfide bond" evidence="1">
    <location>
        <begin position="61"/>
        <end position="186"/>
    </location>
</feature>
<feature type="disulfide bond" evidence="1">
    <location>
        <begin position="65"/>
        <end position="181"/>
    </location>
</feature>
<feature type="sequence variant" id="VAR_066710" description="In CTRCT14; nuclear pulverulent and posterior polar cataract; the mutant affects the formation of gap junction plaques; affects hemichannel permeability; dbSNP:rs397514703." evidence="20">
    <original>G</original>
    <variation>D</variation>
    <location>
        <position position="2"/>
    </location>
</feature>
<feature type="sequence variant" id="VAR_066711" description="In CTRCT14." evidence="12">
    <original>D</original>
    <variation>Y</variation>
    <location>
        <position position="3"/>
    </location>
</feature>
<feature type="sequence variant" id="VAR_030020" description="In CTRCT14; autosomal dominant congenital/infantile 'ant-egg' cataract." evidence="13">
    <original>L</original>
    <variation>S</variation>
    <location>
        <position position="11"/>
    </location>
</feature>
<feature type="sequence variant" id="VAR_084808" description="In CTRCT14; uncertain significance; dbSNP:rs1114167307." evidence="27">
    <original>T</original>
    <variation>M</variation>
    <location>
        <position position="19"/>
    </location>
</feature>
<feature type="sequence variant" id="VAR_066712" description="In CTRCT14; dbSNP:rs1555339539." evidence="11">
    <original>V</original>
    <variation>M</variation>
    <location>
        <position position="28"/>
    </location>
</feature>
<feature type="sequence variant" id="VAR_030021" description="In CTRCT14; nuclear pulverulent cataract." evidence="5">
    <original>F</original>
    <variation>L</variation>
    <location>
        <position position="32"/>
    </location>
</feature>
<feature type="sequence variant" id="VAR_066713" description="In CTRCT14; dbSNP:rs374701362." evidence="15">
    <original>R</original>
    <variation>L</variation>
    <location>
        <position position="33"/>
    </location>
</feature>
<feature type="sequence variant" id="VAR_066714" description="In CTRCT14; nuclear cataract; dbSNP:rs981126461." evidence="17 22">
    <original>V</original>
    <variation>M</variation>
    <location>
        <position position="44"/>
    </location>
</feature>
<feature type="sequence variant" id="VAR_038796" description="In CTRCT14; nuclear progressive cataract." evidence="10">
    <original>W</original>
    <variation>S</variation>
    <location>
        <position position="45"/>
    </location>
</feature>
<feature type="sequence variant" id="VAR_066715" description="In CTRCT14; nuclear cataract." evidence="18 24">
    <original>D</original>
    <variation>N</variation>
    <location>
        <position position="47"/>
    </location>
</feature>
<feature type="sequence variant" id="VAR_075211" description="In CTRCT14." evidence="26">
    <original>E</original>
    <variation>G</variation>
    <location>
        <position position="48"/>
    </location>
</feature>
<feature type="sequence variant" id="VAR_030022" description="In CTRCT14; nuclear punctate cataract; dbSNP:rs864309691." evidence="6 16 21">
    <original>P</original>
    <variation>L</variation>
    <location>
        <position position="59"/>
    </location>
</feature>
<feature type="sequence variant" id="VAR_009158" description="In CTRCT14; dbSNP:rs121917823." evidence="3">
    <original>N</original>
    <variation>S</variation>
    <location>
        <position position="63"/>
    </location>
</feature>
<feature type="sequence variant" id="VAR_066716" description="In CTRCT14; nearly abolishes formation of gap junctions; no significant effect on formation of functional hemichannels." evidence="11 28">
    <original>R</original>
    <variation>G</variation>
    <location>
        <position position="76"/>
    </location>
</feature>
<feature type="sequence variant" id="VAR_030023" description="In CTRCT14; nearly abolishes formation of gap junctions; no significant effect on formation of functional hemichannels; not fully penetrant mutation; dbSNP:rs121917827." evidence="7 16 28">
    <original>R</original>
    <variation>H</variation>
    <location>
        <position position="76"/>
    </location>
</feature>
<feature type="sequence variant" id="VAR_066717" description="In CTRCT14; pearl box cataract; dbSNP:rs864309687." evidence="14">
    <original>T</original>
    <variation>M</variation>
    <location>
        <position position="87"/>
    </location>
</feature>
<feature type="sequence variant" id="VAR_072762" description="In CTRCT14." evidence="25">
    <original>G</original>
    <variation>E</variation>
    <location>
        <position position="143"/>
    </location>
</feature>
<feature type="sequence variant" id="VAR_084809" description="In CTRCT14; uncertain significance; dbSNP:rs1114167308." evidence="27">
    <original>K</original>
    <variation>Q</variation>
    <location>
        <position position="156"/>
    </location>
</feature>
<feature type="sequence variant" id="VAR_023447" description="In CTRCT14; dbSNP:rs121917825." evidence="4">
    <original>P</original>
    <variation>L</variation>
    <location>
        <position position="187"/>
    </location>
</feature>
<feature type="sequence variant" id="VAR_066718" description="In CTRCT14; central nuclear cataract with punctate opacities; dbSNP:rs2141138001." evidence="19">
    <original>P</original>
    <variation>S</variation>
    <location>
        <position position="187"/>
    </location>
</feature>
<feature type="sequence variant" id="VAR_072763" description="In CTRCT14; dbSNP:rs140332366." evidence="23 24">
    <original>N</original>
    <variation>I</variation>
    <location>
        <position position="188"/>
    </location>
</feature>
<feature type="sequence variant" id="VAR_066719" description="In CTRCT14; nuclear pulverulent cataract; dbSNP:rs140332366." evidence="8">
    <original>N</original>
    <variation>T</variation>
    <location>
        <position position="188"/>
    </location>
</feature>
<feature type="sequence variant" id="VAR_022426" description="In dbSNP:rs968566." evidence="3 9">
    <original>L</original>
    <variation>M</variation>
    <location>
        <position position="299"/>
    </location>
</feature>
<feature type="mutagenesis site" description="Abolishes formation of gap junctions. No significant effect on formation of functional hemichannels." evidence="28">
    <original>R</original>
    <variation>E</variation>
    <variation>K</variation>
    <location>
        <position position="76"/>
    </location>
</feature>
<protein>
    <recommendedName>
        <fullName>Gap junction alpha-3 protein</fullName>
    </recommendedName>
    <alternativeName>
        <fullName>Connexin-46</fullName>
        <shortName>Cx46</shortName>
    </alternativeName>
</protein>
<organism>
    <name type="scientific">Homo sapiens</name>
    <name type="common">Human</name>
    <dbReference type="NCBI Taxonomy" id="9606"/>
    <lineage>
        <taxon>Eukaryota</taxon>
        <taxon>Metazoa</taxon>
        <taxon>Chordata</taxon>
        <taxon>Craniata</taxon>
        <taxon>Vertebrata</taxon>
        <taxon>Euteleostomi</taxon>
        <taxon>Mammalia</taxon>
        <taxon>Eutheria</taxon>
        <taxon>Euarchontoglires</taxon>
        <taxon>Primates</taxon>
        <taxon>Haplorrhini</taxon>
        <taxon>Catarrhini</taxon>
        <taxon>Hominidae</taxon>
        <taxon>Homo</taxon>
    </lineage>
</organism>
<keyword id="KW-0898">Cataract</keyword>
<keyword id="KW-0965">Cell junction</keyword>
<keyword id="KW-1003">Cell membrane</keyword>
<keyword id="KW-0225">Disease variant</keyword>
<keyword id="KW-1015">Disulfide bond</keyword>
<keyword id="KW-0303">Gap junction</keyword>
<keyword id="KW-0472">Membrane</keyword>
<keyword id="KW-1267">Proteomics identification</keyword>
<keyword id="KW-1185">Reference proteome</keyword>
<keyword id="KW-0812">Transmembrane</keyword>
<keyword id="KW-1133">Transmembrane helix</keyword>
<comment type="function">
    <text evidence="1 28">Structural component of lens fiber gap junctions (PubMed:30044662). Gap junctions are dodecameric channels that connect the cytoplasm of adjoining cells (By similarity). They are formed by the docking of two hexameric hemichannels, one from each cell membrane. Small molecules and ions diffuse from one cell to a neighboring cell via the central pore (PubMed:30044662).</text>
</comment>
<comment type="subunit">
    <text evidence="1">A hemichannel or connexon is composed of a hexamer of connexins. A functional gap junction is formed by the apposition of two hemichannels. Forms heteromeric channels with GJA8.</text>
</comment>
<comment type="subcellular location">
    <subcellularLocation>
        <location evidence="28">Cell membrane</location>
        <topology evidence="1">Multi-pass membrane protein</topology>
    </subcellularLocation>
    <subcellularLocation>
        <location evidence="28">Cell junction</location>
        <location evidence="28">Gap junction</location>
    </subcellularLocation>
</comment>
<comment type="disease" evidence="3 4 5 6 7 8 10 11 12 13 14 15 16 17 18 19 20 21 22 23 24 25 26 27 28">
    <disease id="DI-02471">
        <name>Cataract 14, multiple types</name>
        <acronym>CTRCT14</acronym>
        <description>An opacification of the crystalline lens of the eye that frequently results in visual impairment or blindness. Opacities vary in morphology, are often confined to a portion of the lens, and may be static or progressive. CTRCT14 includes zonular pulverulent cataract, among others. Zonular or lamellar cataracts are opacities, broad or narrow, usually consisting of powdery white dots affecting only certain layers or zones between the cortex and nucleus of an otherwise clear lens. The opacity may be so dense as to render the entire central region of the lens completely opaque, or so translucent that vision is hardly if at all impeded. Usually sharply separated from a clear cortex outside them, they may have projections from their outer edges known as riders or spokes.</description>
        <dbReference type="MIM" id="601885"/>
    </disease>
    <text>The disease is caused by variants affecting the gene represented in this entry.</text>
</comment>
<comment type="similarity">
    <text evidence="29">Belongs to the connexin family. Alpha-type (group II) subfamily.</text>
</comment>
<proteinExistence type="evidence at protein level"/>
<accession>Q9Y6H8</accession>
<accession>Q0VAB7</accession>
<accession>Q9H537</accession>